<gene>
    <name evidence="1" type="primary">hisE</name>
    <name type="ordered locus">BAMEG_3163</name>
</gene>
<accession>C3L9P5</accession>
<feature type="chain" id="PRO_1000149044" description="Phosphoribosyl-ATP pyrophosphatase">
    <location>
        <begin position="1"/>
        <end position="107"/>
    </location>
</feature>
<keyword id="KW-0028">Amino-acid biosynthesis</keyword>
<keyword id="KW-0067">ATP-binding</keyword>
<keyword id="KW-0963">Cytoplasm</keyword>
<keyword id="KW-0368">Histidine biosynthesis</keyword>
<keyword id="KW-0378">Hydrolase</keyword>
<keyword id="KW-0547">Nucleotide-binding</keyword>
<proteinExistence type="inferred from homology"/>
<dbReference type="EC" id="3.6.1.31" evidence="1"/>
<dbReference type="EMBL" id="CP001215">
    <property type="protein sequence ID" value="ACP13471.1"/>
    <property type="molecule type" value="Genomic_DNA"/>
</dbReference>
<dbReference type="SMR" id="C3L9P5"/>
<dbReference type="KEGG" id="bah:BAMEG_3163"/>
<dbReference type="HOGENOM" id="CLU_123337_0_0_9"/>
<dbReference type="UniPathway" id="UPA00031">
    <property type="reaction ID" value="UER00007"/>
</dbReference>
<dbReference type="GO" id="GO:0005737">
    <property type="term" value="C:cytoplasm"/>
    <property type="evidence" value="ECO:0007669"/>
    <property type="project" value="UniProtKB-SubCell"/>
</dbReference>
<dbReference type="GO" id="GO:0005524">
    <property type="term" value="F:ATP binding"/>
    <property type="evidence" value="ECO:0007669"/>
    <property type="project" value="UniProtKB-KW"/>
</dbReference>
<dbReference type="GO" id="GO:0004636">
    <property type="term" value="F:phosphoribosyl-ATP diphosphatase activity"/>
    <property type="evidence" value="ECO:0007669"/>
    <property type="project" value="UniProtKB-UniRule"/>
</dbReference>
<dbReference type="GO" id="GO:0000105">
    <property type="term" value="P:L-histidine biosynthetic process"/>
    <property type="evidence" value="ECO:0007669"/>
    <property type="project" value="UniProtKB-UniRule"/>
</dbReference>
<dbReference type="CDD" id="cd11534">
    <property type="entry name" value="NTP-PPase_HisIE_like"/>
    <property type="match status" value="1"/>
</dbReference>
<dbReference type="Gene3D" id="1.10.287.1080">
    <property type="entry name" value="MazG-like"/>
    <property type="match status" value="1"/>
</dbReference>
<dbReference type="HAMAP" id="MF_01020">
    <property type="entry name" value="HisE"/>
    <property type="match status" value="1"/>
</dbReference>
<dbReference type="InterPro" id="IPR008179">
    <property type="entry name" value="HisE"/>
</dbReference>
<dbReference type="InterPro" id="IPR021130">
    <property type="entry name" value="PRib-ATP_PPHydrolase-like"/>
</dbReference>
<dbReference type="NCBIfam" id="TIGR03188">
    <property type="entry name" value="histidine_hisI"/>
    <property type="match status" value="1"/>
</dbReference>
<dbReference type="NCBIfam" id="NF001611">
    <property type="entry name" value="PRK00400.1-3"/>
    <property type="match status" value="1"/>
</dbReference>
<dbReference type="PANTHER" id="PTHR42945">
    <property type="entry name" value="HISTIDINE BIOSYNTHESIS BIFUNCTIONAL PROTEIN"/>
    <property type="match status" value="1"/>
</dbReference>
<dbReference type="PANTHER" id="PTHR42945:SF9">
    <property type="entry name" value="HISTIDINE BIOSYNTHESIS BIFUNCTIONAL PROTEIN HISIE"/>
    <property type="match status" value="1"/>
</dbReference>
<dbReference type="Pfam" id="PF01503">
    <property type="entry name" value="PRA-PH"/>
    <property type="match status" value="1"/>
</dbReference>
<dbReference type="SUPFAM" id="SSF101386">
    <property type="entry name" value="all-alpha NTP pyrophosphatases"/>
    <property type="match status" value="1"/>
</dbReference>
<name>HIS2_BACAC</name>
<organism>
    <name type="scientific">Bacillus anthracis (strain CDC 684 / NRRL 3495)</name>
    <dbReference type="NCBI Taxonomy" id="568206"/>
    <lineage>
        <taxon>Bacteria</taxon>
        <taxon>Bacillati</taxon>
        <taxon>Bacillota</taxon>
        <taxon>Bacilli</taxon>
        <taxon>Bacillales</taxon>
        <taxon>Bacillaceae</taxon>
        <taxon>Bacillus</taxon>
        <taxon>Bacillus cereus group</taxon>
    </lineage>
</organism>
<reference key="1">
    <citation type="submission" date="2008-10" db="EMBL/GenBank/DDBJ databases">
        <title>Genome sequence of Bacillus anthracis str. CDC 684.</title>
        <authorList>
            <person name="Dodson R.J."/>
            <person name="Munk A.C."/>
            <person name="Brettin T."/>
            <person name="Bruce D."/>
            <person name="Detter C."/>
            <person name="Tapia R."/>
            <person name="Han C."/>
            <person name="Sutton G."/>
            <person name="Sims D."/>
        </authorList>
    </citation>
    <scope>NUCLEOTIDE SEQUENCE [LARGE SCALE GENOMIC DNA]</scope>
    <source>
        <strain>CDC 684 / NRRL 3495</strain>
    </source>
</reference>
<protein>
    <recommendedName>
        <fullName evidence="1">Phosphoribosyl-ATP pyrophosphatase</fullName>
        <shortName evidence="1">PRA-PH</shortName>
        <ecNumber evidence="1">3.6.1.31</ecNumber>
    </recommendedName>
</protein>
<evidence type="ECO:0000255" key="1">
    <source>
        <dbReference type="HAMAP-Rule" id="MF_01020"/>
    </source>
</evidence>
<sequence length="107" mass="12567">MENTFKLLFETIEERKRNPLPESYTNYLFSKGEDKILKKIGEECTEVIIASKNNDKEELVKEMVDVLYHCFVLLAEKNIPLEDIMEEVTERNGKLSRVGDRREIDTL</sequence>
<comment type="catalytic activity">
    <reaction evidence="1">
        <text>1-(5-phospho-beta-D-ribosyl)-ATP + H2O = 1-(5-phospho-beta-D-ribosyl)-5'-AMP + diphosphate + H(+)</text>
        <dbReference type="Rhea" id="RHEA:22828"/>
        <dbReference type="ChEBI" id="CHEBI:15377"/>
        <dbReference type="ChEBI" id="CHEBI:15378"/>
        <dbReference type="ChEBI" id="CHEBI:33019"/>
        <dbReference type="ChEBI" id="CHEBI:59457"/>
        <dbReference type="ChEBI" id="CHEBI:73183"/>
        <dbReference type="EC" id="3.6.1.31"/>
    </reaction>
</comment>
<comment type="pathway">
    <text evidence="1">Amino-acid biosynthesis; L-histidine biosynthesis; L-histidine from 5-phospho-alpha-D-ribose 1-diphosphate: step 2/9.</text>
</comment>
<comment type="subcellular location">
    <subcellularLocation>
        <location evidence="1">Cytoplasm</location>
    </subcellularLocation>
</comment>
<comment type="similarity">
    <text evidence="1">Belongs to the PRA-PH family.</text>
</comment>